<dbReference type="EMBL" id="CP001339">
    <property type="protein sequence ID" value="ACL73015.1"/>
    <property type="molecule type" value="Genomic_DNA"/>
</dbReference>
<dbReference type="RefSeq" id="WP_012638494.1">
    <property type="nucleotide sequence ID" value="NC_011901.1"/>
</dbReference>
<dbReference type="SMR" id="B8GT00"/>
<dbReference type="STRING" id="396588.Tgr7_1934"/>
<dbReference type="KEGG" id="tgr:Tgr7_1934"/>
<dbReference type="eggNOG" id="COG0851">
    <property type="taxonomic scope" value="Bacteria"/>
</dbReference>
<dbReference type="HOGENOM" id="CLU_137929_2_2_6"/>
<dbReference type="OrthoDB" id="9802655at2"/>
<dbReference type="Proteomes" id="UP000002383">
    <property type="component" value="Chromosome"/>
</dbReference>
<dbReference type="GO" id="GO:0051301">
    <property type="term" value="P:cell division"/>
    <property type="evidence" value="ECO:0007669"/>
    <property type="project" value="UniProtKB-KW"/>
</dbReference>
<dbReference type="GO" id="GO:0032955">
    <property type="term" value="P:regulation of division septum assembly"/>
    <property type="evidence" value="ECO:0007669"/>
    <property type="project" value="InterPro"/>
</dbReference>
<dbReference type="FunFam" id="3.30.1070.10:FF:000001">
    <property type="entry name" value="Cell division topological specificity factor"/>
    <property type="match status" value="1"/>
</dbReference>
<dbReference type="Gene3D" id="3.30.1070.10">
    <property type="entry name" value="Cell division topological specificity factor MinE"/>
    <property type="match status" value="1"/>
</dbReference>
<dbReference type="HAMAP" id="MF_00262">
    <property type="entry name" value="MinE"/>
    <property type="match status" value="1"/>
</dbReference>
<dbReference type="InterPro" id="IPR005527">
    <property type="entry name" value="MinE"/>
</dbReference>
<dbReference type="InterPro" id="IPR036707">
    <property type="entry name" value="MinE_sf"/>
</dbReference>
<dbReference type="NCBIfam" id="TIGR01215">
    <property type="entry name" value="minE"/>
    <property type="match status" value="1"/>
</dbReference>
<dbReference type="NCBIfam" id="NF001422">
    <property type="entry name" value="PRK00296.1"/>
    <property type="match status" value="1"/>
</dbReference>
<dbReference type="Pfam" id="PF03776">
    <property type="entry name" value="MinE"/>
    <property type="match status" value="1"/>
</dbReference>
<dbReference type="SUPFAM" id="SSF55229">
    <property type="entry name" value="Cell division protein MinE topological specificity domain"/>
    <property type="match status" value="1"/>
</dbReference>
<accession>B8GT00</accession>
<keyword id="KW-0131">Cell cycle</keyword>
<keyword id="KW-0132">Cell division</keyword>
<keyword id="KW-1185">Reference proteome</keyword>
<proteinExistence type="inferred from homology"/>
<comment type="function">
    <text evidence="1">Prevents the cell division inhibition by proteins MinC and MinD at internal division sites while permitting inhibition at polar sites. This ensures cell division at the proper site by restricting the formation of a division septum at the midpoint of the long axis of the cell.</text>
</comment>
<comment type="similarity">
    <text evidence="1">Belongs to the MinE family.</text>
</comment>
<protein>
    <recommendedName>
        <fullName evidence="1">Cell division topological specificity factor</fullName>
    </recommendedName>
</protein>
<gene>
    <name evidence="1" type="primary">minE</name>
    <name type="ordered locus">Tgr7_1934</name>
</gene>
<organism>
    <name type="scientific">Thioalkalivibrio sulfidiphilus (strain HL-EbGR7)</name>
    <dbReference type="NCBI Taxonomy" id="396588"/>
    <lineage>
        <taxon>Bacteria</taxon>
        <taxon>Pseudomonadati</taxon>
        <taxon>Pseudomonadota</taxon>
        <taxon>Gammaproteobacteria</taxon>
        <taxon>Chromatiales</taxon>
        <taxon>Ectothiorhodospiraceae</taxon>
        <taxon>Thioalkalivibrio</taxon>
    </lineage>
</organism>
<feature type="chain" id="PRO_1000191298" description="Cell division topological specificity factor">
    <location>
        <begin position="1"/>
        <end position="85"/>
    </location>
</feature>
<sequence length="85" mass="10026">MNFFNYFRSQKKKSAQVAKERLQVIVARERVHRDGPDYLPRLQEEILNVIRKYVQVDEDAVSIQLERDGDCEVLELNVTLPEHKA</sequence>
<name>MINE_THISH</name>
<evidence type="ECO:0000255" key="1">
    <source>
        <dbReference type="HAMAP-Rule" id="MF_00262"/>
    </source>
</evidence>
<reference key="1">
    <citation type="journal article" date="2011" name="Stand. Genomic Sci.">
        <title>Complete genome sequence of 'Thioalkalivibrio sulfidophilus' HL-EbGr7.</title>
        <authorList>
            <person name="Muyzer G."/>
            <person name="Sorokin D.Y."/>
            <person name="Mavromatis K."/>
            <person name="Lapidus A."/>
            <person name="Clum A."/>
            <person name="Ivanova N."/>
            <person name="Pati A."/>
            <person name="d'Haeseleer P."/>
            <person name="Woyke T."/>
            <person name="Kyrpides N.C."/>
        </authorList>
    </citation>
    <scope>NUCLEOTIDE SEQUENCE [LARGE SCALE GENOMIC DNA]</scope>
    <source>
        <strain>HL-EbGR7</strain>
    </source>
</reference>